<evidence type="ECO:0000255" key="1"/>
<evidence type="ECO:0000269" key="2">
    <source>
    </source>
</evidence>
<evidence type="ECO:0000303" key="3">
    <source>
    </source>
</evidence>
<evidence type="ECO:0000303" key="4">
    <source>
    </source>
</evidence>
<evidence type="ECO:0000303" key="5">
    <source>
    </source>
</evidence>
<evidence type="ECO:0000305" key="6"/>
<evidence type="ECO:0000305" key="7">
    <source>
    </source>
</evidence>
<evidence type="ECO:0000312" key="8">
    <source>
        <dbReference type="MGI" id="MGI:1913908"/>
    </source>
</evidence>
<feature type="transit peptide" description="Mitochondrion" evidence="1">
    <location>
        <begin position="1"/>
        <end position="35"/>
    </location>
</feature>
<feature type="chain" id="PRO_0000288869" description="Mitochondrial potassium channel" evidence="1">
    <location>
        <begin position="36"/>
        <end position="406"/>
    </location>
</feature>
<feature type="topological domain" description="Mitochondrial matrix" evidence="7">
    <location>
        <begin position="36"/>
        <end position="198"/>
    </location>
</feature>
<feature type="transmembrane region" description="Helical" evidence="1">
    <location>
        <begin position="199"/>
        <end position="219"/>
    </location>
</feature>
<feature type="topological domain" description="Mitochondrial intermembrane" evidence="7">
    <location>
        <begin position="220"/>
        <end position="382"/>
    </location>
</feature>
<feature type="transmembrane region" description="Helical" evidence="1">
    <location>
        <begin position="383"/>
        <end position="403"/>
    </location>
</feature>
<feature type="topological domain" description="Mitochondrial matrix" evidence="7">
    <location>
        <begin position="404"/>
        <end position="406"/>
    </location>
</feature>
<feature type="coiled-coil region" evidence="1">
    <location>
        <begin position="113"/>
        <end position="140"/>
    </location>
</feature>
<feature type="splice variant" id="VSP_025801" description="In isoform 2." evidence="3 4">
    <location>
        <begin position="1"/>
        <end position="31"/>
    </location>
</feature>
<feature type="sequence conflict" description="In Ref. 2; AAH98221." evidence="6" ref="2">
    <original>R</original>
    <variation>W</variation>
    <location>
        <position position="160"/>
    </location>
</feature>
<organism>
    <name type="scientific">Mus musculus</name>
    <name type="common">Mouse</name>
    <dbReference type="NCBI Taxonomy" id="10090"/>
    <lineage>
        <taxon>Eukaryota</taxon>
        <taxon>Metazoa</taxon>
        <taxon>Chordata</taxon>
        <taxon>Craniata</taxon>
        <taxon>Vertebrata</taxon>
        <taxon>Euteleostomi</taxon>
        <taxon>Mammalia</taxon>
        <taxon>Eutheria</taxon>
        <taxon>Euarchontoglires</taxon>
        <taxon>Glires</taxon>
        <taxon>Rodentia</taxon>
        <taxon>Myomorpha</taxon>
        <taxon>Muroidea</taxon>
        <taxon>Muridae</taxon>
        <taxon>Murinae</taxon>
        <taxon>Mus</taxon>
        <taxon>Mus</taxon>
    </lineage>
</organism>
<name>MITOK_MOUSE</name>
<sequence length="406" mass="45132">MTGCSPVFAMQHVVGVPRILVRRTFLGTDVTMTRTLCSPGPREKRPEAAALGLFHRLPELGRTLSHTVRHQAASTAKAWWDRYEEFVGLNEVREAQGNVTEAEKVFMVARGLVREAREGLEAQQTKLKEVRDRLDRVSREDNQYLELATLEHRMLQEEKRLRIAYLRAEDSEREKFSLFSAAVRESHEKERTRAERTKNWSLIGSVLGALIGVAGSTYVNRVRLQELKALLLEAQKGPASLQEAIREQASSYSLQQKDLQDLMMDLRGLVHAEQGQGSGSPTGSSTRGKDIDGLSATMKEQLRHSRQVYSCLEGLREQLDGLEKTCSQMAGVLQLAQAPAHPGTVGPVDGALPSSLLEHGSVILALSEMEQRLEAQANRNTVSSTLVTCVTFLATLPLLYMLFKTS</sequence>
<comment type="function">
    <text evidence="2">Pore-forming subunit of the mitochondrial ATP-gated potassium channel (mitoK(ATP)). Together with ATP-binding subunit ABCB8/MITOSUR of the mitoK(ATP) channel, mediates ATP-dependent K(+) currents across the mitochondrial inner membrane. An increase in ATP intracellular levels closes the channel, inhibiting K(+) transport, whereas a decrease in ATP levels enhances K(+) uptake in the mitochondrial matrix. May contribute to the homeostatic control of cellular metabolism under stress conditions by regulating the mitochondrial matrix volume.</text>
</comment>
<comment type="catalytic activity">
    <reaction evidence="2">
        <text>K(+)(in) = K(+)(out)</text>
        <dbReference type="Rhea" id="RHEA:29463"/>
        <dbReference type="ChEBI" id="CHEBI:29103"/>
    </reaction>
</comment>
<comment type="activity regulation">
    <text evidence="2">Inhibited by ATP via mitoK(ATP) channel.</text>
</comment>
<comment type="subunit">
    <text evidence="7">The mitochondrial potassium channel (mitoK(ATP)) is composed of 4 subunits of CCDC51/MITOK and 4 subunits of ABCB8/MITOSUR.</text>
</comment>
<comment type="subcellular location">
    <subcellularLocation>
        <location evidence="2">Mitochondrion inner membrane</location>
        <topology evidence="1">Multi-pass membrane protein</topology>
    </subcellularLocation>
</comment>
<comment type="alternative products">
    <event type="alternative splicing"/>
    <isoform>
        <id>Q3URS9-1</id>
        <name>1</name>
        <sequence type="displayed"/>
    </isoform>
    <isoform>
        <id>Q3URS9-2</id>
        <name>2</name>
        <sequence type="described" ref="VSP_025801"/>
    </isoform>
</comment>
<comment type="disruption phenotype">
    <text evidence="2">Knockout mice exhibit no visible phenotype (PubMed:31435016). Mutant mice are slightly more sensitive to the ischaemia-reperfusion protocol (PubMed:31435016).</text>
</comment>
<proteinExistence type="evidence at protein level"/>
<protein>
    <recommendedName>
        <fullName evidence="5">Mitochondrial potassium channel</fullName>
        <shortName evidence="5">MITOK</shortName>
    </recommendedName>
    <alternativeName>
        <fullName>Coiled-coil domain-containing protein 51</fullName>
    </alternativeName>
</protein>
<reference key="1">
    <citation type="journal article" date="2005" name="Science">
        <title>The transcriptional landscape of the mammalian genome.</title>
        <authorList>
            <person name="Carninci P."/>
            <person name="Kasukawa T."/>
            <person name="Katayama S."/>
            <person name="Gough J."/>
            <person name="Frith M.C."/>
            <person name="Maeda N."/>
            <person name="Oyama R."/>
            <person name="Ravasi T."/>
            <person name="Lenhard B."/>
            <person name="Wells C."/>
            <person name="Kodzius R."/>
            <person name="Shimokawa K."/>
            <person name="Bajic V.B."/>
            <person name="Brenner S.E."/>
            <person name="Batalov S."/>
            <person name="Forrest A.R."/>
            <person name="Zavolan M."/>
            <person name="Davis M.J."/>
            <person name="Wilming L.G."/>
            <person name="Aidinis V."/>
            <person name="Allen J.E."/>
            <person name="Ambesi-Impiombato A."/>
            <person name="Apweiler R."/>
            <person name="Aturaliya R.N."/>
            <person name="Bailey T.L."/>
            <person name="Bansal M."/>
            <person name="Baxter L."/>
            <person name="Beisel K.W."/>
            <person name="Bersano T."/>
            <person name="Bono H."/>
            <person name="Chalk A.M."/>
            <person name="Chiu K.P."/>
            <person name="Choudhary V."/>
            <person name="Christoffels A."/>
            <person name="Clutterbuck D.R."/>
            <person name="Crowe M.L."/>
            <person name="Dalla E."/>
            <person name="Dalrymple B.P."/>
            <person name="de Bono B."/>
            <person name="Della Gatta G."/>
            <person name="di Bernardo D."/>
            <person name="Down T."/>
            <person name="Engstrom P."/>
            <person name="Fagiolini M."/>
            <person name="Faulkner G."/>
            <person name="Fletcher C.F."/>
            <person name="Fukushima T."/>
            <person name="Furuno M."/>
            <person name="Futaki S."/>
            <person name="Gariboldi M."/>
            <person name="Georgii-Hemming P."/>
            <person name="Gingeras T.R."/>
            <person name="Gojobori T."/>
            <person name="Green R.E."/>
            <person name="Gustincich S."/>
            <person name="Harbers M."/>
            <person name="Hayashi Y."/>
            <person name="Hensch T.K."/>
            <person name="Hirokawa N."/>
            <person name="Hill D."/>
            <person name="Huminiecki L."/>
            <person name="Iacono M."/>
            <person name="Ikeo K."/>
            <person name="Iwama A."/>
            <person name="Ishikawa T."/>
            <person name="Jakt M."/>
            <person name="Kanapin A."/>
            <person name="Katoh M."/>
            <person name="Kawasawa Y."/>
            <person name="Kelso J."/>
            <person name="Kitamura H."/>
            <person name="Kitano H."/>
            <person name="Kollias G."/>
            <person name="Krishnan S.P."/>
            <person name="Kruger A."/>
            <person name="Kummerfeld S.K."/>
            <person name="Kurochkin I.V."/>
            <person name="Lareau L.F."/>
            <person name="Lazarevic D."/>
            <person name="Lipovich L."/>
            <person name="Liu J."/>
            <person name="Liuni S."/>
            <person name="McWilliam S."/>
            <person name="Madan Babu M."/>
            <person name="Madera M."/>
            <person name="Marchionni L."/>
            <person name="Matsuda H."/>
            <person name="Matsuzawa S."/>
            <person name="Miki H."/>
            <person name="Mignone F."/>
            <person name="Miyake S."/>
            <person name="Morris K."/>
            <person name="Mottagui-Tabar S."/>
            <person name="Mulder N."/>
            <person name="Nakano N."/>
            <person name="Nakauchi H."/>
            <person name="Ng P."/>
            <person name="Nilsson R."/>
            <person name="Nishiguchi S."/>
            <person name="Nishikawa S."/>
            <person name="Nori F."/>
            <person name="Ohara O."/>
            <person name="Okazaki Y."/>
            <person name="Orlando V."/>
            <person name="Pang K.C."/>
            <person name="Pavan W.J."/>
            <person name="Pavesi G."/>
            <person name="Pesole G."/>
            <person name="Petrovsky N."/>
            <person name="Piazza S."/>
            <person name="Reed J."/>
            <person name="Reid J.F."/>
            <person name="Ring B.Z."/>
            <person name="Ringwald M."/>
            <person name="Rost B."/>
            <person name="Ruan Y."/>
            <person name="Salzberg S.L."/>
            <person name="Sandelin A."/>
            <person name="Schneider C."/>
            <person name="Schoenbach C."/>
            <person name="Sekiguchi K."/>
            <person name="Semple C.A."/>
            <person name="Seno S."/>
            <person name="Sessa L."/>
            <person name="Sheng Y."/>
            <person name="Shibata Y."/>
            <person name="Shimada H."/>
            <person name="Shimada K."/>
            <person name="Silva D."/>
            <person name="Sinclair B."/>
            <person name="Sperling S."/>
            <person name="Stupka E."/>
            <person name="Sugiura K."/>
            <person name="Sultana R."/>
            <person name="Takenaka Y."/>
            <person name="Taki K."/>
            <person name="Tammoja K."/>
            <person name="Tan S.L."/>
            <person name="Tang S."/>
            <person name="Taylor M.S."/>
            <person name="Tegner J."/>
            <person name="Teichmann S.A."/>
            <person name="Ueda H.R."/>
            <person name="van Nimwegen E."/>
            <person name="Verardo R."/>
            <person name="Wei C.L."/>
            <person name="Yagi K."/>
            <person name="Yamanishi H."/>
            <person name="Zabarovsky E."/>
            <person name="Zhu S."/>
            <person name="Zimmer A."/>
            <person name="Hide W."/>
            <person name="Bult C."/>
            <person name="Grimmond S.M."/>
            <person name="Teasdale R.D."/>
            <person name="Liu E.T."/>
            <person name="Brusic V."/>
            <person name="Quackenbush J."/>
            <person name="Wahlestedt C."/>
            <person name="Mattick J.S."/>
            <person name="Hume D.A."/>
            <person name="Kai C."/>
            <person name="Sasaki D."/>
            <person name="Tomaru Y."/>
            <person name="Fukuda S."/>
            <person name="Kanamori-Katayama M."/>
            <person name="Suzuki M."/>
            <person name="Aoki J."/>
            <person name="Arakawa T."/>
            <person name="Iida J."/>
            <person name="Imamura K."/>
            <person name="Itoh M."/>
            <person name="Kato T."/>
            <person name="Kawaji H."/>
            <person name="Kawagashira N."/>
            <person name="Kawashima T."/>
            <person name="Kojima M."/>
            <person name="Kondo S."/>
            <person name="Konno H."/>
            <person name="Nakano K."/>
            <person name="Ninomiya N."/>
            <person name="Nishio T."/>
            <person name="Okada M."/>
            <person name="Plessy C."/>
            <person name="Shibata K."/>
            <person name="Shiraki T."/>
            <person name="Suzuki S."/>
            <person name="Tagami M."/>
            <person name="Waki K."/>
            <person name="Watahiki A."/>
            <person name="Okamura-Oho Y."/>
            <person name="Suzuki H."/>
            <person name="Kawai J."/>
            <person name="Hayashizaki Y."/>
        </authorList>
    </citation>
    <scope>NUCLEOTIDE SEQUENCE [LARGE SCALE MRNA] (ISOFORMS 1 AND 2)</scope>
    <source>
        <strain>C57BL/6J</strain>
        <tissue>Embryo</tissue>
        <tissue>Head</tissue>
    </source>
</reference>
<reference key="2">
    <citation type="journal article" date="2004" name="Genome Res.">
        <title>The status, quality, and expansion of the NIH full-length cDNA project: the Mammalian Gene Collection (MGC).</title>
        <authorList>
            <consortium name="The MGC Project Team"/>
        </authorList>
    </citation>
    <scope>NUCLEOTIDE SEQUENCE [LARGE SCALE MRNA] (ISOFORM 2)</scope>
    <source>
        <strain>C57BL/6J</strain>
        <tissue>Brain</tissue>
        <tissue>Mammary gland</tissue>
    </source>
</reference>
<reference key="3">
    <citation type="journal article" date="2010" name="Cell">
        <title>A tissue-specific atlas of mouse protein phosphorylation and expression.</title>
        <authorList>
            <person name="Huttlin E.L."/>
            <person name="Jedrychowski M.P."/>
            <person name="Elias J.E."/>
            <person name="Goswami T."/>
            <person name="Rad R."/>
            <person name="Beausoleil S.A."/>
            <person name="Villen J."/>
            <person name="Haas W."/>
            <person name="Sowa M.E."/>
            <person name="Gygi S.P."/>
        </authorList>
    </citation>
    <scope>IDENTIFICATION BY MASS SPECTROMETRY [LARGE SCALE ANALYSIS]</scope>
    <source>
        <tissue>Brain</tissue>
        <tissue>Brown adipose tissue</tissue>
        <tissue>Heart</tissue>
        <tissue>Kidney</tissue>
        <tissue>Liver</tissue>
        <tissue>Spleen</tissue>
    </source>
</reference>
<reference key="4">
    <citation type="journal article" date="2019" name="Nature">
        <title>Identification of an ATP-sensitive potassium channel in mitochondria.</title>
        <authorList>
            <person name="Paggio A."/>
            <person name="Checchetto V."/>
            <person name="Campo A."/>
            <person name="Menabo R."/>
            <person name="Di Marco G."/>
            <person name="Di Lisa F."/>
            <person name="Szabo I."/>
            <person name="Rizzuto R."/>
            <person name="De Stefani D."/>
        </authorList>
    </citation>
    <scope>FUNCTION</scope>
    <scope>TRANSPORTER ACTIVITY</scope>
    <scope>SUBCELLULAR LOCATION</scope>
    <scope>DISRUPTION PHENOTYPE</scope>
    <scope>ACTIVITY REGULATION</scope>
    <scope>SUBUNIT</scope>
</reference>
<gene>
    <name evidence="8" type="primary">Ccdc51</name>
    <name evidence="5" type="synonym">Mitok</name>
</gene>
<accession>Q3URS9</accession>
<accession>Q4QQL1</accession>
<accession>Q9CXS1</accession>
<dbReference type="EMBL" id="AK014056">
    <property type="protein sequence ID" value="BAB29135.1"/>
    <property type="molecule type" value="mRNA"/>
</dbReference>
<dbReference type="EMBL" id="AK137013">
    <property type="protein sequence ID" value="BAE23205.1"/>
    <property type="molecule type" value="mRNA"/>
</dbReference>
<dbReference type="EMBL" id="AK141240">
    <property type="protein sequence ID" value="BAE24609.1"/>
    <property type="molecule type" value="mRNA"/>
</dbReference>
<dbReference type="EMBL" id="BC098221">
    <property type="protein sequence ID" value="AAH98221.2"/>
    <property type="molecule type" value="mRNA"/>
</dbReference>
<dbReference type="EMBL" id="BC116786">
    <property type="protein sequence ID" value="AAI16787.1"/>
    <property type="molecule type" value="mRNA"/>
</dbReference>
<dbReference type="EMBL" id="BC116788">
    <property type="protein sequence ID" value="AAI16789.1"/>
    <property type="molecule type" value="mRNA"/>
</dbReference>
<dbReference type="CCDS" id="CCDS52931.1">
    <molecule id="Q3URS9-1"/>
</dbReference>
<dbReference type="RefSeq" id="NP_079965.2">
    <molecule id="Q3URS9-1"/>
    <property type="nucleotide sequence ID" value="NM_025689.4"/>
</dbReference>
<dbReference type="SMR" id="Q3URS9"/>
<dbReference type="BioGRID" id="211626">
    <property type="interactions" value="3"/>
</dbReference>
<dbReference type="ComplexPortal" id="CPX-6084">
    <property type="entry name" value="MITOK-MITOSUR mitochondrial potassium channel complex"/>
</dbReference>
<dbReference type="FunCoup" id="Q3URS9">
    <property type="interactions" value="663"/>
</dbReference>
<dbReference type="IntAct" id="Q3URS9">
    <property type="interactions" value="2"/>
</dbReference>
<dbReference type="STRING" id="10090.ENSMUSP00000026735"/>
<dbReference type="iPTMnet" id="Q3URS9"/>
<dbReference type="PhosphoSitePlus" id="Q3URS9"/>
<dbReference type="SwissPalm" id="Q3URS9"/>
<dbReference type="jPOST" id="Q3URS9"/>
<dbReference type="PaxDb" id="10090-ENSMUSP00000026735"/>
<dbReference type="PeptideAtlas" id="Q3URS9"/>
<dbReference type="ProteomicsDB" id="281311">
    <molecule id="Q3URS9-1"/>
</dbReference>
<dbReference type="ProteomicsDB" id="281312">
    <molecule id="Q3URS9-2"/>
</dbReference>
<dbReference type="Pumba" id="Q3URS9"/>
<dbReference type="Antibodypedia" id="2566">
    <property type="antibodies" value="123 antibodies from 19 providers"/>
</dbReference>
<dbReference type="Ensembl" id="ENSMUST00000026735.9">
    <molecule id="Q3URS9-1"/>
    <property type="protein sequence ID" value="ENSMUSP00000026735.8"/>
    <property type="gene ID" value="ENSMUSG00000025645.9"/>
</dbReference>
<dbReference type="GeneID" id="66658"/>
<dbReference type="KEGG" id="mmu:66658"/>
<dbReference type="UCSC" id="uc009rrx.2">
    <molecule id="Q3URS9-1"/>
    <property type="organism name" value="mouse"/>
</dbReference>
<dbReference type="AGR" id="MGI:1913908"/>
<dbReference type="CTD" id="79714"/>
<dbReference type="MGI" id="MGI:1913908">
    <property type="gene designation" value="Ccdc51"/>
</dbReference>
<dbReference type="VEuPathDB" id="HostDB:ENSMUSG00000025645"/>
<dbReference type="eggNOG" id="ENOG502QWCS">
    <property type="taxonomic scope" value="Eukaryota"/>
</dbReference>
<dbReference type="GeneTree" id="ENSGT00390000001709"/>
<dbReference type="HOGENOM" id="CLU_060968_0_0_1"/>
<dbReference type="InParanoid" id="Q3URS9"/>
<dbReference type="OMA" id="STATTWW"/>
<dbReference type="OrthoDB" id="6243211at2759"/>
<dbReference type="PhylomeDB" id="Q3URS9"/>
<dbReference type="TreeFam" id="TF318449"/>
<dbReference type="BioGRID-ORCS" id="66658">
    <property type="hits" value="1 hit in 76 CRISPR screens"/>
</dbReference>
<dbReference type="ChiTaRS" id="Ccdc51">
    <property type="organism name" value="mouse"/>
</dbReference>
<dbReference type="PRO" id="PR:Q3URS9"/>
<dbReference type="Proteomes" id="UP000000589">
    <property type="component" value="Chromosome 9"/>
</dbReference>
<dbReference type="RNAct" id="Q3URS9">
    <property type="molecule type" value="protein"/>
</dbReference>
<dbReference type="Bgee" id="ENSMUSG00000025645">
    <property type="expression patterns" value="Expressed in right kidney and 175 other cell types or tissues"/>
</dbReference>
<dbReference type="GO" id="GO:0062157">
    <property type="term" value="C:mitochondrial ATP-gated potassium channel complex"/>
    <property type="evidence" value="ECO:0000353"/>
    <property type="project" value="ComplexPortal"/>
</dbReference>
<dbReference type="GO" id="GO:0005743">
    <property type="term" value="C:mitochondrial inner membrane"/>
    <property type="evidence" value="ECO:0000314"/>
    <property type="project" value="UniProtKB"/>
</dbReference>
<dbReference type="GO" id="GO:0005739">
    <property type="term" value="C:mitochondrion"/>
    <property type="evidence" value="ECO:0007005"/>
    <property type="project" value="MGI"/>
</dbReference>
<dbReference type="GO" id="GO:0034705">
    <property type="term" value="C:potassium channel complex"/>
    <property type="evidence" value="ECO:0000314"/>
    <property type="project" value="UniProtKB"/>
</dbReference>
<dbReference type="GO" id="GO:0062156">
    <property type="term" value="F:mitochondrial ATP-gated potassium channel activity"/>
    <property type="evidence" value="ECO:0000314"/>
    <property type="project" value="UniProtKB"/>
</dbReference>
<dbReference type="GO" id="GO:0006884">
    <property type="term" value="P:cell volume homeostasis"/>
    <property type="evidence" value="ECO:0000266"/>
    <property type="project" value="ComplexPortal"/>
</dbReference>
<dbReference type="GO" id="GO:0140141">
    <property type="term" value="P:mitochondrial potassium ion transmembrane transport"/>
    <property type="evidence" value="ECO:0000266"/>
    <property type="project" value="ComplexPortal"/>
</dbReference>
<dbReference type="GO" id="GO:0071805">
    <property type="term" value="P:potassium ion transmembrane transport"/>
    <property type="evidence" value="ECO:0000314"/>
    <property type="project" value="UniProtKB"/>
</dbReference>
<dbReference type="InterPro" id="IPR037660">
    <property type="entry name" value="CCDC51"/>
</dbReference>
<dbReference type="PANTHER" id="PTHR28624">
    <property type="entry name" value="COILED-COIL DOMAIN-CONTAINING PROTEIN 51"/>
    <property type="match status" value="1"/>
</dbReference>
<dbReference type="PANTHER" id="PTHR28624:SF1">
    <property type="entry name" value="MITOCHONDRIAL POTASSIUM CHANNEL"/>
    <property type="match status" value="1"/>
</dbReference>
<keyword id="KW-0025">Alternative splicing</keyword>
<keyword id="KW-0175">Coiled coil</keyword>
<keyword id="KW-0407">Ion channel</keyword>
<keyword id="KW-0406">Ion transport</keyword>
<keyword id="KW-0472">Membrane</keyword>
<keyword id="KW-0496">Mitochondrion</keyword>
<keyword id="KW-0999">Mitochondrion inner membrane</keyword>
<keyword id="KW-0630">Potassium</keyword>
<keyword id="KW-0631">Potassium channel</keyword>
<keyword id="KW-0633">Potassium transport</keyword>
<keyword id="KW-1185">Reference proteome</keyword>
<keyword id="KW-0809">Transit peptide</keyword>
<keyword id="KW-0812">Transmembrane</keyword>
<keyword id="KW-1133">Transmembrane helix</keyword>
<keyword id="KW-0813">Transport</keyword>